<comment type="function">
    <text evidence="1">Cleaves beta-linked terminal galactosyl residues from gangliosides, glycoproteins, and glycosaminoglycans.</text>
</comment>
<comment type="catalytic activity">
    <reaction>
        <text>Hydrolysis of terminal non-reducing beta-D-galactose residues in beta-D-galactosides.</text>
        <dbReference type="EC" id="3.2.1.23"/>
    </reaction>
</comment>
<comment type="subcellular location">
    <subcellularLocation>
        <location evidence="1">Secreted</location>
    </subcellularLocation>
</comment>
<comment type="similarity">
    <text evidence="3">Belongs to the glycosyl hydrolase 35 family.</text>
</comment>
<protein>
    <recommendedName>
        <fullName>Probable beta-galactosidase C</fullName>
        <ecNumber>3.2.1.23</ecNumber>
    </recommendedName>
    <alternativeName>
        <fullName>Lactase C</fullName>
    </alternativeName>
</protein>
<feature type="signal peptide" evidence="2">
    <location>
        <begin position="1"/>
        <end position="23"/>
    </location>
</feature>
<feature type="chain" id="PRO_0000395237" description="Probable beta-galactosidase C">
    <location>
        <begin position="24"/>
        <end position="983"/>
    </location>
</feature>
<feature type="active site" description="Proton donor" evidence="2">
    <location>
        <position position="188"/>
    </location>
</feature>
<feature type="active site" description="Nucleophile" evidence="2">
    <location>
        <position position="287"/>
    </location>
</feature>
<feature type="binding site" evidence="1">
    <location>
        <position position="82"/>
    </location>
    <ligand>
        <name>substrate</name>
    </ligand>
</feature>
<feature type="binding site" evidence="1">
    <location>
        <position position="127"/>
    </location>
    <ligand>
        <name>substrate</name>
    </ligand>
</feature>
<feature type="binding site" evidence="1">
    <location>
        <position position="128"/>
    </location>
    <ligand>
        <name>substrate</name>
    </ligand>
</feature>
<feature type="binding site" evidence="1">
    <location>
        <position position="129"/>
    </location>
    <ligand>
        <name>substrate</name>
    </ligand>
</feature>
<feature type="binding site" evidence="1">
    <location>
        <position position="187"/>
    </location>
    <ligand>
        <name>substrate</name>
    </ligand>
</feature>
<feature type="binding site" evidence="1">
    <location>
        <position position="251"/>
    </location>
    <ligand>
        <name>substrate</name>
    </ligand>
</feature>
<feature type="binding site" evidence="1">
    <location>
        <position position="353"/>
    </location>
    <ligand>
        <name>substrate</name>
    </ligand>
</feature>
<feature type="glycosylation site" description="N-linked (GlcNAc...) asparagine" evidence="2">
    <location>
        <position position="197"/>
    </location>
</feature>
<feature type="glycosylation site" description="N-linked (GlcNAc...) asparagine" evidence="2">
    <location>
        <position position="276"/>
    </location>
</feature>
<feature type="glycosylation site" description="N-linked (GlcNAc...) asparagine" evidence="2">
    <location>
        <position position="391"/>
    </location>
</feature>
<feature type="glycosylation site" description="N-linked (GlcNAc...) asparagine" evidence="2">
    <location>
        <position position="434"/>
    </location>
</feature>
<feature type="glycosylation site" description="N-linked (GlcNAc...) asparagine" evidence="2">
    <location>
        <position position="466"/>
    </location>
</feature>
<feature type="glycosylation site" description="N-linked (GlcNAc...) asparagine" evidence="2">
    <location>
        <position position="516"/>
    </location>
</feature>
<feature type="glycosylation site" description="N-linked (GlcNAc...) asparagine" evidence="2">
    <location>
        <position position="601"/>
    </location>
</feature>
<feature type="glycosylation site" description="N-linked (GlcNAc...) asparagine" evidence="2">
    <location>
        <position position="676"/>
    </location>
</feature>
<feature type="glycosylation site" description="N-linked (GlcNAc...) asparagine" evidence="2">
    <location>
        <position position="714"/>
    </location>
</feature>
<feature type="glycosylation site" description="N-linked (GlcNAc...) asparagine" evidence="2">
    <location>
        <position position="719"/>
    </location>
</feature>
<feature type="glycosylation site" description="N-linked (GlcNAc...) asparagine" evidence="2">
    <location>
        <position position="758"/>
    </location>
</feature>
<feature type="glycosylation site" description="N-linked (GlcNAc...) asparagine" evidence="2">
    <location>
        <position position="804"/>
    </location>
</feature>
<feature type="disulfide bond" evidence="1">
    <location>
        <begin position="257"/>
        <end position="304"/>
    </location>
</feature>
<accession>Q4WNE4</accession>
<keyword id="KW-0119">Carbohydrate metabolism</keyword>
<keyword id="KW-1015">Disulfide bond</keyword>
<keyword id="KW-0325">Glycoprotein</keyword>
<keyword id="KW-0326">Glycosidase</keyword>
<keyword id="KW-0378">Hydrolase</keyword>
<keyword id="KW-0624">Polysaccharide degradation</keyword>
<keyword id="KW-1185">Reference proteome</keyword>
<keyword id="KW-0964">Secreted</keyword>
<keyword id="KW-0732">Signal</keyword>
<proteinExistence type="inferred from homology"/>
<sequence length="983" mass="108035">MRIFSFLFLLLLGILTGQGLVSGTDNGKTTDVTWDKYSLSVKGQRLFVFSGEFHYQRLPVPELWLDVFQKLRANGFNAISVYFFWSFHSASEGEFDFENGAHDIQRLFDYAKEAGLYVIARAGPYCNAETSAGGFALWAANGQMGNERTSDEAYYEKWRPWILEVGKIIAKNQITNGGPVILNQHENELVETTYDPNHTLVVYMKQIAQVFEEAGIVVPSSHNEKGMRGVSWSTDYHNVGGAVNIYGLDSYPGGLSCTNPNSGFNLVRTYHQWFQNYSFTQPSYLPEFEGGWFQPWGGSFYDTCATELSPEFPDVYYKNNIGSRVTLHSIYMTYGGTNWGHSAAPVVYTSYDYAAPLRETREIRDKLKQTKLIGLFTRVSKDLLKTYMEGNGTGYTSDSSIYTWSLRNPDTNAGFYVLAHSTSSTRDVTTFTLNVTTSAGAISIPDIELNGRQSKIIVTDYNFGTNSTLLFSSAEVLTYANLDVNVLVFYLNVGQKGTFVFKDEPKLAFQTYGNSNLTTSESSYGTQYSYTQGKGVTAVKFSNGVLAYFLDKESAWNFFAPPTTSSPQVAPNEHILVQGPYLVRGASVNHGTVEITGDNANTTSIEVYTGNSQVKKIKWNGKTIETRKTAYGSLIGTAPGAEDVKIQLPSLDSWKAQDTLPEIQPDYDDSKWTVCNKTTSVNAIAPLSLPVLYSGDYGYHAGTKVYRGRFDGRNVTGANVTVQNGAAAGWAAWVNGQYAGGSAGSPNLAATSAVLTFNSSSLKDQDNVLTVVTDYTGHDQNSVRPKGTQNPRGILGATLIGGGNFTSWRIQGNAGGEKNIDPVRGPMNEGGLYGERMGWHLPGYKVPKSASKSSPLDGVSGAEGRFYTTTFKLKLDKDLDVPIGLQLGAPEGTKAVVQVFMNGYQFGHYLPHTGPQSLFPFPPGVINNRGENTLAISMWALTDAGAKLDKVELVAYGKYRSGFDFNQDWGYLQPGWKDRSQYA</sequence>
<reference key="1">
    <citation type="journal article" date="2005" name="Nature">
        <title>Genomic sequence of the pathogenic and allergenic filamentous fungus Aspergillus fumigatus.</title>
        <authorList>
            <person name="Nierman W.C."/>
            <person name="Pain A."/>
            <person name="Anderson M.J."/>
            <person name="Wortman J.R."/>
            <person name="Kim H.S."/>
            <person name="Arroyo J."/>
            <person name="Berriman M."/>
            <person name="Abe K."/>
            <person name="Archer D.B."/>
            <person name="Bermejo C."/>
            <person name="Bennett J.W."/>
            <person name="Bowyer P."/>
            <person name="Chen D."/>
            <person name="Collins M."/>
            <person name="Coulsen R."/>
            <person name="Davies R."/>
            <person name="Dyer P.S."/>
            <person name="Farman M.L."/>
            <person name="Fedorova N."/>
            <person name="Fedorova N.D."/>
            <person name="Feldblyum T.V."/>
            <person name="Fischer R."/>
            <person name="Fosker N."/>
            <person name="Fraser A."/>
            <person name="Garcia J.L."/>
            <person name="Garcia M.J."/>
            <person name="Goble A."/>
            <person name="Goldman G.H."/>
            <person name="Gomi K."/>
            <person name="Griffith-Jones S."/>
            <person name="Gwilliam R."/>
            <person name="Haas B.J."/>
            <person name="Haas H."/>
            <person name="Harris D.E."/>
            <person name="Horiuchi H."/>
            <person name="Huang J."/>
            <person name="Humphray S."/>
            <person name="Jimenez J."/>
            <person name="Keller N."/>
            <person name="Khouri H."/>
            <person name="Kitamoto K."/>
            <person name="Kobayashi T."/>
            <person name="Konzack S."/>
            <person name="Kulkarni R."/>
            <person name="Kumagai T."/>
            <person name="Lafton A."/>
            <person name="Latge J.-P."/>
            <person name="Li W."/>
            <person name="Lord A."/>
            <person name="Lu C."/>
            <person name="Majoros W.H."/>
            <person name="May G.S."/>
            <person name="Miller B.L."/>
            <person name="Mohamoud Y."/>
            <person name="Molina M."/>
            <person name="Monod M."/>
            <person name="Mouyna I."/>
            <person name="Mulligan S."/>
            <person name="Murphy L.D."/>
            <person name="O'Neil S."/>
            <person name="Paulsen I."/>
            <person name="Penalva M.A."/>
            <person name="Pertea M."/>
            <person name="Price C."/>
            <person name="Pritchard B.L."/>
            <person name="Quail M.A."/>
            <person name="Rabbinowitsch E."/>
            <person name="Rawlins N."/>
            <person name="Rajandream M.A."/>
            <person name="Reichard U."/>
            <person name="Renauld H."/>
            <person name="Robson G.D."/>
            <person name="Rodriguez de Cordoba S."/>
            <person name="Rodriguez-Pena J.M."/>
            <person name="Ronning C.M."/>
            <person name="Rutter S."/>
            <person name="Salzberg S.L."/>
            <person name="Sanchez M."/>
            <person name="Sanchez-Ferrero J.C."/>
            <person name="Saunders D."/>
            <person name="Seeger K."/>
            <person name="Squares R."/>
            <person name="Squares S."/>
            <person name="Takeuchi M."/>
            <person name="Tekaia F."/>
            <person name="Turner G."/>
            <person name="Vazquez de Aldana C.R."/>
            <person name="Weidman J."/>
            <person name="White O."/>
            <person name="Woodward J.R."/>
            <person name="Yu J.-H."/>
            <person name="Fraser C.M."/>
            <person name="Galagan J.E."/>
            <person name="Asai K."/>
            <person name="Machida M."/>
            <person name="Hall N."/>
            <person name="Barrell B.G."/>
            <person name="Denning D.W."/>
        </authorList>
    </citation>
    <scope>NUCLEOTIDE SEQUENCE [LARGE SCALE GENOMIC DNA]</scope>
    <source>
        <strain>ATCC MYA-4609 / CBS 101355 / FGSC A1100 / Af293</strain>
    </source>
</reference>
<evidence type="ECO:0000250" key="1"/>
<evidence type="ECO:0000255" key="2"/>
<evidence type="ECO:0000305" key="3"/>
<dbReference type="EC" id="3.2.1.23"/>
<dbReference type="EMBL" id="AAHF01000006">
    <property type="protein sequence ID" value="EAL88520.1"/>
    <property type="molecule type" value="Genomic_DNA"/>
</dbReference>
<dbReference type="RefSeq" id="XP_750558.1">
    <property type="nucleotide sequence ID" value="XM_745465.1"/>
</dbReference>
<dbReference type="SMR" id="Q4WNE4"/>
<dbReference type="STRING" id="330879.Q4WNE4"/>
<dbReference type="GlyCosmos" id="Q4WNE4">
    <property type="glycosylation" value="12 sites, No reported glycans"/>
</dbReference>
<dbReference type="EnsemblFungi" id="EAL88520">
    <property type="protein sequence ID" value="EAL88520"/>
    <property type="gene ID" value="AFUA_6G06660"/>
</dbReference>
<dbReference type="GeneID" id="3508765"/>
<dbReference type="KEGG" id="afm:AFUA_6G06660"/>
<dbReference type="VEuPathDB" id="FungiDB:Afu6g06660"/>
<dbReference type="eggNOG" id="KOG0496">
    <property type="taxonomic scope" value="Eukaryota"/>
</dbReference>
<dbReference type="HOGENOM" id="CLU_005732_2_1_1"/>
<dbReference type="InParanoid" id="Q4WNE4"/>
<dbReference type="OMA" id="PEFEGGW"/>
<dbReference type="OrthoDB" id="1657402at2759"/>
<dbReference type="Proteomes" id="UP000002530">
    <property type="component" value="Chromosome 6"/>
</dbReference>
<dbReference type="GO" id="GO:0005576">
    <property type="term" value="C:extracellular region"/>
    <property type="evidence" value="ECO:0007669"/>
    <property type="project" value="UniProtKB-SubCell"/>
</dbReference>
<dbReference type="GO" id="GO:0005773">
    <property type="term" value="C:vacuole"/>
    <property type="evidence" value="ECO:0000318"/>
    <property type="project" value="GO_Central"/>
</dbReference>
<dbReference type="GO" id="GO:0004565">
    <property type="term" value="F:beta-galactosidase activity"/>
    <property type="evidence" value="ECO:0000318"/>
    <property type="project" value="GO_Central"/>
</dbReference>
<dbReference type="GO" id="GO:0019388">
    <property type="term" value="P:galactose catabolic process"/>
    <property type="evidence" value="ECO:0000318"/>
    <property type="project" value="GO_Central"/>
</dbReference>
<dbReference type="GO" id="GO:0000272">
    <property type="term" value="P:polysaccharide catabolic process"/>
    <property type="evidence" value="ECO:0007669"/>
    <property type="project" value="UniProtKB-KW"/>
</dbReference>
<dbReference type="FunFam" id="2.102.20.10:FF:000001">
    <property type="entry name" value="Beta-galactosidase A"/>
    <property type="match status" value="1"/>
</dbReference>
<dbReference type="FunFam" id="2.60.120.260:FF:000065">
    <property type="entry name" value="Beta-galactosidase A"/>
    <property type="match status" value="1"/>
</dbReference>
<dbReference type="FunFam" id="2.60.390.10:FF:000001">
    <property type="entry name" value="Beta-galactosidase A"/>
    <property type="match status" value="1"/>
</dbReference>
<dbReference type="FunFam" id="3.20.20.80:FF:000040">
    <property type="entry name" value="Beta-galactosidase A"/>
    <property type="match status" value="1"/>
</dbReference>
<dbReference type="FunFam" id="2.60.120.260:FF:000144">
    <property type="entry name" value="Probable beta-galactosidase C"/>
    <property type="match status" value="1"/>
</dbReference>
<dbReference type="Gene3D" id="2.102.20.10">
    <property type="entry name" value="Beta-galactosidase, domain 2"/>
    <property type="match status" value="1"/>
</dbReference>
<dbReference type="Gene3D" id="2.60.390.10">
    <property type="entry name" value="Beta-galactosidase, domain 3"/>
    <property type="match status" value="1"/>
</dbReference>
<dbReference type="Gene3D" id="2.60.120.260">
    <property type="entry name" value="Galactose-binding domain-like"/>
    <property type="match status" value="2"/>
</dbReference>
<dbReference type="Gene3D" id="3.20.20.80">
    <property type="entry name" value="Glycosidases"/>
    <property type="match status" value="1"/>
</dbReference>
<dbReference type="InterPro" id="IPR018954">
    <property type="entry name" value="Betagal_dom2"/>
</dbReference>
<dbReference type="InterPro" id="IPR037110">
    <property type="entry name" value="Betagal_dom2_sf"/>
</dbReference>
<dbReference type="InterPro" id="IPR025972">
    <property type="entry name" value="BetaGal_dom3"/>
</dbReference>
<dbReference type="InterPro" id="IPR036833">
    <property type="entry name" value="BetaGal_dom3_sf"/>
</dbReference>
<dbReference type="InterPro" id="IPR025300">
    <property type="entry name" value="BetaGal_jelly_roll_dom"/>
</dbReference>
<dbReference type="InterPro" id="IPR008979">
    <property type="entry name" value="Galactose-bd-like_sf"/>
</dbReference>
<dbReference type="InterPro" id="IPR031330">
    <property type="entry name" value="Gly_Hdrlase_35_cat"/>
</dbReference>
<dbReference type="InterPro" id="IPR001944">
    <property type="entry name" value="Glycoside_Hdrlase_35"/>
</dbReference>
<dbReference type="InterPro" id="IPR017853">
    <property type="entry name" value="Glycoside_hydrolase_SF"/>
</dbReference>
<dbReference type="PANTHER" id="PTHR23421">
    <property type="entry name" value="BETA-GALACTOSIDASE RELATED"/>
    <property type="match status" value="1"/>
</dbReference>
<dbReference type="Pfam" id="PF13364">
    <property type="entry name" value="BetaGal_ABD2"/>
    <property type="match status" value="2"/>
</dbReference>
<dbReference type="Pfam" id="PF10435">
    <property type="entry name" value="BetaGal_dom2"/>
    <property type="match status" value="1"/>
</dbReference>
<dbReference type="Pfam" id="PF13363">
    <property type="entry name" value="BetaGal_dom3"/>
    <property type="match status" value="1"/>
</dbReference>
<dbReference type="Pfam" id="PF01301">
    <property type="entry name" value="Glyco_hydro_35"/>
    <property type="match status" value="1"/>
</dbReference>
<dbReference type="PRINTS" id="PR00742">
    <property type="entry name" value="GLHYDRLASE35"/>
</dbReference>
<dbReference type="SMART" id="SM01029">
    <property type="entry name" value="BetaGal_dom2"/>
    <property type="match status" value="1"/>
</dbReference>
<dbReference type="SUPFAM" id="SSF51445">
    <property type="entry name" value="(Trans)glycosidases"/>
    <property type="match status" value="1"/>
</dbReference>
<dbReference type="SUPFAM" id="SSF117100">
    <property type="entry name" value="Beta-galactosidase LacA, domain 3"/>
    <property type="match status" value="1"/>
</dbReference>
<dbReference type="SUPFAM" id="SSF49785">
    <property type="entry name" value="Galactose-binding domain-like"/>
    <property type="match status" value="2"/>
</dbReference>
<dbReference type="SUPFAM" id="SSF51011">
    <property type="entry name" value="Glycosyl hydrolase domain"/>
    <property type="match status" value="1"/>
</dbReference>
<gene>
    <name type="primary">lacC</name>
    <name type="ORF">AFUA_6G06660</name>
</gene>
<name>BGALC_ASPFU</name>
<organism>
    <name type="scientific">Aspergillus fumigatus (strain ATCC MYA-4609 / CBS 101355 / FGSC A1100 / Af293)</name>
    <name type="common">Neosartorya fumigata</name>
    <dbReference type="NCBI Taxonomy" id="330879"/>
    <lineage>
        <taxon>Eukaryota</taxon>
        <taxon>Fungi</taxon>
        <taxon>Dikarya</taxon>
        <taxon>Ascomycota</taxon>
        <taxon>Pezizomycotina</taxon>
        <taxon>Eurotiomycetes</taxon>
        <taxon>Eurotiomycetidae</taxon>
        <taxon>Eurotiales</taxon>
        <taxon>Aspergillaceae</taxon>
        <taxon>Aspergillus</taxon>
        <taxon>Aspergillus subgen. Fumigati</taxon>
    </lineage>
</organism>